<organism>
    <name type="scientific">Arabidopsis thaliana</name>
    <name type="common">Mouse-ear cress</name>
    <dbReference type="NCBI Taxonomy" id="3702"/>
    <lineage>
        <taxon>Eukaryota</taxon>
        <taxon>Viridiplantae</taxon>
        <taxon>Streptophyta</taxon>
        <taxon>Embryophyta</taxon>
        <taxon>Tracheophyta</taxon>
        <taxon>Spermatophyta</taxon>
        <taxon>Magnoliopsida</taxon>
        <taxon>eudicotyledons</taxon>
        <taxon>Gunneridae</taxon>
        <taxon>Pentapetalae</taxon>
        <taxon>rosids</taxon>
        <taxon>malvids</taxon>
        <taxon>Brassicales</taxon>
        <taxon>Brassicaceae</taxon>
        <taxon>Camelineae</taxon>
        <taxon>Arabidopsis</taxon>
    </lineage>
</organism>
<gene>
    <name evidence="4" type="primary">TTM1</name>
    <name evidence="6" type="ordered locus">At1g73980</name>
    <name evidence="7" type="ORF">F2P9.15</name>
</gene>
<evidence type="ECO:0000255" key="1"/>
<evidence type="ECO:0000255" key="2">
    <source>
        <dbReference type="PROSITE-ProRule" id="PRU01044"/>
    </source>
</evidence>
<evidence type="ECO:0000269" key="3">
    <source>
    </source>
</evidence>
<evidence type="ECO:0000303" key="4">
    <source>
    </source>
</evidence>
<evidence type="ECO:0000305" key="5"/>
<evidence type="ECO:0000312" key="6">
    <source>
        <dbReference type="Araport" id="AT1G73980"/>
    </source>
</evidence>
<evidence type="ECO:0000312" key="7">
    <source>
        <dbReference type="EMBL" id="AAG52525.1"/>
    </source>
</evidence>
<evidence type="ECO:0007829" key="8">
    <source>
        <dbReference type="PDB" id="7Z67"/>
    </source>
</evidence>
<comment type="function">
    <text evidence="3">Exhibits pyrophosphatase activity with stronger affinity for pyrophosphate (PPi), moderate affinity for ATP and ADP, and weak affinity for tripolyphosphate (PPPi). No activity observed toward uridine substrate. Positively regulates natural and dark-induced leaf senescence.</text>
</comment>
<comment type="catalytic activity">
    <reaction evidence="3">
        <text>diphosphate + H2O = 2 phosphate + H(+)</text>
        <dbReference type="Rhea" id="RHEA:24576"/>
        <dbReference type="ChEBI" id="CHEBI:15377"/>
        <dbReference type="ChEBI" id="CHEBI:15378"/>
        <dbReference type="ChEBI" id="CHEBI:33019"/>
        <dbReference type="ChEBI" id="CHEBI:43474"/>
        <dbReference type="EC" id="3.6.1.1"/>
    </reaction>
</comment>
<comment type="cofactor">
    <cofactor evidence="3">
        <name>Mg(2+)</name>
        <dbReference type="ChEBI" id="CHEBI:18420"/>
    </cofactor>
</comment>
<comment type="biophysicochemical properties">
    <kinetics>
        <KM evidence="3">16.7 uM for pyrophosphate</KM>
        <Vmax evidence="3">284.0 nmol/min/ug enzyme with pyrophosphate as substrate</Vmax>
    </kinetics>
    <phDependence>
        <text evidence="3">Optimum pH is 8-9.</text>
    </phDependence>
</comment>
<comment type="subcellular location">
    <subcellularLocation>
        <location evidence="3">Mitochondrion outer membrane</location>
        <topology evidence="1">Single-pass membrane protein</topology>
    </subcellularLocation>
</comment>
<comment type="tissue specificity">
    <text evidence="3">Ubiquitously expressed in all tissues, with strong expression detected in senescent leaves.</text>
</comment>
<comment type="induction">
    <text evidence="3">Accumulates during leaf senescence.</text>
</comment>
<comment type="disruption phenotype">
    <text evidence="3">Delayed dark-induced and natural senescence.</text>
</comment>
<proteinExistence type="evidence at protein level"/>
<feature type="transit peptide" description="Mitochondrion" evidence="1">
    <location>
        <begin position="1"/>
        <end position="15"/>
    </location>
</feature>
<feature type="chain" id="PRO_0000444983" description="Inorganic pyrophosphatase TTM1">
    <location>
        <begin position="16"/>
        <end position="643"/>
    </location>
</feature>
<feature type="transmembrane region" description="Helical" evidence="1">
    <location>
        <begin position="618"/>
        <end position="638"/>
    </location>
</feature>
<feature type="domain" description="CYTH" evidence="2">
    <location>
        <begin position="248"/>
        <end position="410"/>
    </location>
</feature>
<feature type="strand" evidence="8">
    <location>
        <begin position="24"/>
        <end position="26"/>
    </location>
</feature>
<feature type="strand" evidence="8">
    <location>
        <begin position="33"/>
        <end position="35"/>
    </location>
</feature>
<feature type="strand" evidence="8">
    <location>
        <begin position="38"/>
        <end position="42"/>
    </location>
</feature>
<feature type="helix" evidence="8">
    <location>
        <begin position="44"/>
        <end position="61"/>
    </location>
</feature>
<feature type="strand" evidence="8">
    <location>
        <begin position="66"/>
        <end position="71"/>
    </location>
</feature>
<feature type="helix" evidence="8">
    <location>
        <begin position="78"/>
        <end position="88"/>
    </location>
</feature>
<feature type="strand" evidence="8">
    <location>
        <begin position="92"/>
        <end position="96"/>
    </location>
</feature>
<feature type="helix" evidence="8">
    <location>
        <begin position="97"/>
        <end position="100"/>
    </location>
</feature>
<feature type="helix" evidence="8">
    <location>
        <begin position="103"/>
        <end position="105"/>
    </location>
</feature>
<feature type="helix" evidence="8">
    <location>
        <begin position="114"/>
        <end position="116"/>
    </location>
</feature>
<feature type="helix" evidence="8">
    <location>
        <begin position="119"/>
        <end position="130"/>
    </location>
</feature>
<feature type="strand" evidence="8">
    <location>
        <begin position="135"/>
        <end position="141"/>
    </location>
</feature>
<feature type="turn" evidence="8">
    <location>
        <begin position="142"/>
        <end position="145"/>
    </location>
</feature>
<feature type="strand" evidence="8">
    <location>
        <begin position="146"/>
        <end position="153"/>
    </location>
</feature>
<feature type="strand" evidence="8">
    <location>
        <begin position="160"/>
        <end position="165"/>
    </location>
</feature>
<feature type="turn" evidence="8">
    <location>
        <begin position="166"/>
        <end position="169"/>
    </location>
</feature>
<feature type="turn" evidence="8">
    <location>
        <begin position="171"/>
        <end position="173"/>
    </location>
</feature>
<feature type="helix" evidence="8">
    <location>
        <begin position="174"/>
        <end position="176"/>
    </location>
</feature>
<feature type="strand" evidence="8">
    <location>
        <begin position="178"/>
        <end position="185"/>
    </location>
</feature>
<feature type="helix" evidence="8">
    <location>
        <begin position="186"/>
        <end position="199"/>
    </location>
</feature>
<feature type="helix" evidence="8">
    <location>
        <begin position="206"/>
        <end position="217"/>
    </location>
</feature>
<feature type="helix" evidence="8">
    <location>
        <begin position="221"/>
        <end position="224"/>
    </location>
</feature>
<feature type="helix" evidence="8">
    <location>
        <begin position="226"/>
        <end position="230"/>
    </location>
</feature>
<feature type="strand" evidence="8">
    <location>
        <begin position="233"/>
        <end position="238"/>
    </location>
</feature>
<feature type="helix" evidence="8">
    <location>
        <begin position="244"/>
        <end position="247"/>
    </location>
</feature>
<feature type="strand" evidence="8">
    <location>
        <begin position="250"/>
        <end position="255"/>
    </location>
</feature>
<feature type="helix" evidence="8">
    <location>
        <begin position="261"/>
        <end position="267"/>
    </location>
</feature>
<feature type="strand" evidence="8">
    <location>
        <begin position="272"/>
        <end position="285"/>
    </location>
</feature>
<feature type="strand" evidence="8">
    <location>
        <begin position="292"/>
        <end position="294"/>
    </location>
</feature>
<feature type="strand" evidence="8">
    <location>
        <begin position="298"/>
        <end position="305"/>
    </location>
</feature>
<feature type="strand" evidence="8">
    <location>
        <begin position="307"/>
        <end position="311"/>
    </location>
</feature>
<feature type="strand" evidence="8">
    <location>
        <begin position="315"/>
        <end position="317"/>
    </location>
</feature>
<feature type="strand" evidence="8">
    <location>
        <begin position="320"/>
        <end position="323"/>
    </location>
</feature>
<feature type="strand" evidence="8">
    <location>
        <begin position="327"/>
        <end position="330"/>
    </location>
</feature>
<feature type="helix" evidence="8">
    <location>
        <begin position="333"/>
        <end position="340"/>
    </location>
</feature>
<feature type="strand" evidence="8">
    <location>
        <begin position="344"/>
        <end position="357"/>
    </location>
</feature>
<feature type="strand" evidence="8">
    <location>
        <begin position="359"/>
        <end position="368"/>
    </location>
</feature>
<feature type="turn" evidence="8">
    <location>
        <begin position="369"/>
        <end position="372"/>
    </location>
</feature>
<feature type="strand" evidence="8">
    <location>
        <begin position="373"/>
        <end position="381"/>
    </location>
</feature>
<feature type="helix" evidence="8">
    <location>
        <begin position="383"/>
        <end position="392"/>
    </location>
</feature>
<feature type="helix" evidence="8">
    <location>
        <begin position="404"/>
        <end position="410"/>
    </location>
</feature>
<protein>
    <recommendedName>
        <fullName evidence="5">Inorganic pyrophosphatase TTM1</fullName>
        <ecNumber evidence="3">3.6.1.1</ecNumber>
    </recommendedName>
    <alternativeName>
        <fullName evidence="4">Triphosphate tunnel metalloenzyme 1</fullName>
        <shortName evidence="4">AtTTM1</shortName>
    </alternativeName>
</protein>
<accession>Q9C9B9</accession>
<dbReference type="EC" id="3.6.1.1" evidence="3"/>
<dbReference type="EMBL" id="AC016662">
    <property type="protein sequence ID" value="AAG52525.1"/>
    <property type="molecule type" value="Genomic_DNA"/>
</dbReference>
<dbReference type="EMBL" id="CP002684">
    <property type="protein sequence ID" value="AEE35534.1"/>
    <property type="molecule type" value="Genomic_DNA"/>
</dbReference>
<dbReference type="EMBL" id="CP002684">
    <property type="protein sequence ID" value="ANM58436.1"/>
    <property type="molecule type" value="Genomic_DNA"/>
</dbReference>
<dbReference type="EMBL" id="CP002684">
    <property type="protein sequence ID" value="ANM58437.1"/>
    <property type="molecule type" value="Genomic_DNA"/>
</dbReference>
<dbReference type="EMBL" id="AF462846">
    <property type="protein sequence ID" value="AAL58933.1"/>
    <property type="molecule type" value="mRNA"/>
</dbReference>
<dbReference type="EMBL" id="BT002630">
    <property type="protein sequence ID" value="AAO11546.1"/>
    <property type="molecule type" value="mRNA"/>
</dbReference>
<dbReference type="PIR" id="E96767">
    <property type="entry name" value="E96767"/>
</dbReference>
<dbReference type="RefSeq" id="NP_001320870.1">
    <property type="nucleotide sequence ID" value="NM_001334620.1"/>
</dbReference>
<dbReference type="RefSeq" id="NP_001320871.1">
    <property type="nucleotide sequence ID" value="NM_001334621.1"/>
</dbReference>
<dbReference type="RefSeq" id="NP_177538.1">
    <property type="nucleotide sequence ID" value="NM_106057.3"/>
</dbReference>
<dbReference type="PDB" id="7Z66">
    <property type="method" value="X-ray"/>
    <property type="resolution" value="2.70 A"/>
    <property type="chains" value="AAAA=20-412"/>
</dbReference>
<dbReference type="PDB" id="7Z67">
    <property type="method" value="X-ray"/>
    <property type="resolution" value="2.65 A"/>
    <property type="chains" value="A=20-412"/>
</dbReference>
<dbReference type="PDBsum" id="7Z66"/>
<dbReference type="PDBsum" id="7Z67"/>
<dbReference type="SMR" id="Q9C9B9"/>
<dbReference type="FunCoup" id="Q9C9B9">
    <property type="interactions" value="770"/>
</dbReference>
<dbReference type="STRING" id="3702.Q9C9B9"/>
<dbReference type="iPTMnet" id="Q9C9B9"/>
<dbReference type="PaxDb" id="3702-AT1G73980.1"/>
<dbReference type="ProteomicsDB" id="234629"/>
<dbReference type="EnsemblPlants" id="AT1G73980.1">
    <property type="protein sequence ID" value="AT1G73980.1"/>
    <property type="gene ID" value="AT1G73980"/>
</dbReference>
<dbReference type="EnsemblPlants" id="AT1G73980.2">
    <property type="protein sequence ID" value="AT1G73980.2"/>
    <property type="gene ID" value="AT1G73980"/>
</dbReference>
<dbReference type="EnsemblPlants" id="AT1G73980.3">
    <property type="protein sequence ID" value="AT1G73980.3"/>
    <property type="gene ID" value="AT1G73980"/>
</dbReference>
<dbReference type="GeneID" id="843736"/>
<dbReference type="Gramene" id="AT1G73980.1">
    <property type="protein sequence ID" value="AT1G73980.1"/>
    <property type="gene ID" value="AT1G73980"/>
</dbReference>
<dbReference type="Gramene" id="AT1G73980.2">
    <property type="protein sequence ID" value="AT1G73980.2"/>
    <property type="gene ID" value="AT1G73980"/>
</dbReference>
<dbReference type="Gramene" id="AT1G73980.3">
    <property type="protein sequence ID" value="AT1G73980.3"/>
    <property type="gene ID" value="AT1G73980"/>
</dbReference>
<dbReference type="KEGG" id="ath:AT1G73980"/>
<dbReference type="Araport" id="AT1G73980"/>
<dbReference type="TAIR" id="AT1G73980">
    <property type="gene designation" value="TTM1"/>
</dbReference>
<dbReference type="eggNOG" id="KOG4203">
    <property type="taxonomic scope" value="Eukaryota"/>
</dbReference>
<dbReference type="HOGENOM" id="CLU_028566_0_0_1"/>
<dbReference type="InParanoid" id="Q9C9B9"/>
<dbReference type="OMA" id="HIFDDDK"/>
<dbReference type="OrthoDB" id="10257085at2759"/>
<dbReference type="PhylomeDB" id="Q9C9B9"/>
<dbReference type="BioCyc" id="ARA:AT1G73980-MONOMER"/>
<dbReference type="SABIO-RK" id="Q9C9B9"/>
<dbReference type="PRO" id="PR:Q9C9B9"/>
<dbReference type="Proteomes" id="UP000006548">
    <property type="component" value="Chromosome 1"/>
</dbReference>
<dbReference type="ExpressionAtlas" id="Q9C9B9">
    <property type="expression patterns" value="baseline and differential"/>
</dbReference>
<dbReference type="GO" id="GO:0005741">
    <property type="term" value="C:mitochondrial outer membrane"/>
    <property type="evidence" value="ECO:0000314"/>
    <property type="project" value="TAIR"/>
</dbReference>
<dbReference type="GO" id="GO:0005524">
    <property type="term" value="F:ATP binding"/>
    <property type="evidence" value="ECO:0007669"/>
    <property type="project" value="InterPro"/>
</dbReference>
<dbReference type="GO" id="GO:0004427">
    <property type="term" value="F:inorganic diphosphate phosphatase activity"/>
    <property type="evidence" value="ECO:0007669"/>
    <property type="project" value="UniProtKB-EC"/>
</dbReference>
<dbReference type="GO" id="GO:0016301">
    <property type="term" value="F:kinase activity"/>
    <property type="evidence" value="ECO:0007669"/>
    <property type="project" value="InterPro"/>
</dbReference>
<dbReference type="GO" id="GO:0016462">
    <property type="term" value="F:pyrophosphatase activity"/>
    <property type="evidence" value="ECO:0000314"/>
    <property type="project" value="TAIR"/>
</dbReference>
<dbReference type="GO" id="GO:0006952">
    <property type="term" value="P:defense response"/>
    <property type="evidence" value="ECO:0007669"/>
    <property type="project" value="UniProtKB-KW"/>
</dbReference>
<dbReference type="GO" id="GO:1900055">
    <property type="term" value="P:regulation of leaf senescence"/>
    <property type="evidence" value="ECO:0000315"/>
    <property type="project" value="UniProtKB"/>
</dbReference>
<dbReference type="CDD" id="cd02028">
    <property type="entry name" value="UMPK_like"/>
    <property type="match status" value="1"/>
</dbReference>
<dbReference type="Gene3D" id="2.40.320.10">
    <property type="entry name" value="Hypothetical Protein Pfu-838710-001"/>
    <property type="match status" value="1"/>
</dbReference>
<dbReference type="Gene3D" id="3.40.50.300">
    <property type="entry name" value="P-loop containing nucleotide triphosphate hydrolases"/>
    <property type="match status" value="1"/>
</dbReference>
<dbReference type="InterPro" id="IPR033469">
    <property type="entry name" value="CYTH-like_dom_sf"/>
</dbReference>
<dbReference type="InterPro" id="IPR023577">
    <property type="entry name" value="CYTH_domain"/>
</dbReference>
<dbReference type="InterPro" id="IPR027417">
    <property type="entry name" value="P-loop_NTPase"/>
</dbReference>
<dbReference type="InterPro" id="IPR006083">
    <property type="entry name" value="PRK/URK"/>
</dbReference>
<dbReference type="PANTHER" id="PTHR10285">
    <property type="entry name" value="URIDINE KINASE"/>
    <property type="match status" value="1"/>
</dbReference>
<dbReference type="Pfam" id="PF01928">
    <property type="entry name" value="CYTH"/>
    <property type="match status" value="1"/>
</dbReference>
<dbReference type="Pfam" id="PF00485">
    <property type="entry name" value="PRK"/>
    <property type="match status" value="1"/>
</dbReference>
<dbReference type="PRINTS" id="PR00988">
    <property type="entry name" value="URIDINKINASE"/>
</dbReference>
<dbReference type="SUPFAM" id="SSF55154">
    <property type="entry name" value="CYTH-like phosphatases"/>
    <property type="match status" value="1"/>
</dbReference>
<dbReference type="SUPFAM" id="SSF52540">
    <property type="entry name" value="P-loop containing nucleoside triphosphate hydrolases"/>
    <property type="match status" value="1"/>
</dbReference>
<dbReference type="PROSITE" id="PS51707">
    <property type="entry name" value="CYTH"/>
    <property type="match status" value="1"/>
</dbReference>
<keyword id="KW-0002">3D-structure</keyword>
<keyword id="KW-0378">Hydrolase</keyword>
<keyword id="KW-0472">Membrane</keyword>
<keyword id="KW-0496">Mitochondrion</keyword>
<keyword id="KW-1000">Mitochondrion outer membrane</keyword>
<keyword id="KW-0611">Plant defense</keyword>
<keyword id="KW-1185">Reference proteome</keyword>
<keyword id="KW-0809">Transit peptide</keyword>
<keyword id="KW-0812">Transmembrane</keyword>
<keyword id="KW-1133">Transmembrane helix</keyword>
<name>TTM1_ARATH</name>
<reference key="1">
    <citation type="journal article" date="2000" name="Nature">
        <title>Sequence and analysis of chromosome 1 of the plant Arabidopsis thaliana.</title>
        <authorList>
            <person name="Theologis A."/>
            <person name="Ecker J.R."/>
            <person name="Palm C.J."/>
            <person name="Federspiel N.A."/>
            <person name="Kaul S."/>
            <person name="White O."/>
            <person name="Alonso J."/>
            <person name="Altafi H."/>
            <person name="Araujo R."/>
            <person name="Bowman C.L."/>
            <person name="Brooks S.Y."/>
            <person name="Buehler E."/>
            <person name="Chan A."/>
            <person name="Chao Q."/>
            <person name="Chen H."/>
            <person name="Cheuk R.F."/>
            <person name="Chin C.W."/>
            <person name="Chung M.K."/>
            <person name="Conn L."/>
            <person name="Conway A.B."/>
            <person name="Conway A.R."/>
            <person name="Creasy T.H."/>
            <person name="Dewar K."/>
            <person name="Dunn P."/>
            <person name="Etgu P."/>
            <person name="Feldblyum T.V."/>
            <person name="Feng J.-D."/>
            <person name="Fong B."/>
            <person name="Fujii C.Y."/>
            <person name="Gill J.E."/>
            <person name="Goldsmith A.D."/>
            <person name="Haas B."/>
            <person name="Hansen N.F."/>
            <person name="Hughes B."/>
            <person name="Huizar L."/>
            <person name="Hunter J.L."/>
            <person name="Jenkins J."/>
            <person name="Johnson-Hopson C."/>
            <person name="Khan S."/>
            <person name="Khaykin E."/>
            <person name="Kim C.J."/>
            <person name="Koo H.L."/>
            <person name="Kremenetskaia I."/>
            <person name="Kurtz D.B."/>
            <person name="Kwan A."/>
            <person name="Lam B."/>
            <person name="Langin-Hooper S."/>
            <person name="Lee A."/>
            <person name="Lee J.M."/>
            <person name="Lenz C.A."/>
            <person name="Li J.H."/>
            <person name="Li Y.-P."/>
            <person name="Lin X."/>
            <person name="Liu S.X."/>
            <person name="Liu Z.A."/>
            <person name="Luros J.S."/>
            <person name="Maiti R."/>
            <person name="Marziali A."/>
            <person name="Militscher J."/>
            <person name="Miranda M."/>
            <person name="Nguyen M."/>
            <person name="Nierman W.C."/>
            <person name="Osborne B.I."/>
            <person name="Pai G."/>
            <person name="Peterson J."/>
            <person name="Pham P.K."/>
            <person name="Rizzo M."/>
            <person name="Rooney T."/>
            <person name="Rowley D."/>
            <person name="Sakano H."/>
            <person name="Salzberg S.L."/>
            <person name="Schwartz J.R."/>
            <person name="Shinn P."/>
            <person name="Southwick A.M."/>
            <person name="Sun H."/>
            <person name="Tallon L.J."/>
            <person name="Tambunga G."/>
            <person name="Toriumi M.J."/>
            <person name="Town C.D."/>
            <person name="Utterback T."/>
            <person name="Van Aken S."/>
            <person name="Vaysberg M."/>
            <person name="Vysotskaia V.S."/>
            <person name="Walker M."/>
            <person name="Wu D."/>
            <person name="Yu G."/>
            <person name="Fraser C.M."/>
            <person name="Venter J.C."/>
            <person name="Davis R.W."/>
        </authorList>
    </citation>
    <scope>NUCLEOTIDE SEQUENCE [LARGE SCALE GENOMIC DNA]</scope>
    <source>
        <strain>cv. Columbia</strain>
    </source>
</reference>
<reference key="2">
    <citation type="journal article" date="2017" name="Plant J.">
        <title>Araport11: a complete reannotation of the Arabidopsis thaliana reference genome.</title>
        <authorList>
            <person name="Cheng C.Y."/>
            <person name="Krishnakumar V."/>
            <person name="Chan A.P."/>
            <person name="Thibaud-Nissen F."/>
            <person name="Schobel S."/>
            <person name="Town C.D."/>
        </authorList>
    </citation>
    <scope>GENOME REANNOTATION</scope>
    <source>
        <strain>cv. Columbia</strain>
    </source>
</reference>
<reference key="3">
    <citation type="journal article" date="2003" name="Science">
        <title>Empirical analysis of transcriptional activity in the Arabidopsis genome.</title>
        <authorList>
            <person name="Yamada K."/>
            <person name="Lim J."/>
            <person name="Dale J.M."/>
            <person name="Chen H."/>
            <person name="Shinn P."/>
            <person name="Palm C.J."/>
            <person name="Southwick A.M."/>
            <person name="Wu H.C."/>
            <person name="Kim C.J."/>
            <person name="Nguyen M."/>
            <person name="Pham P.K."/>
            <person name="Cheuk R.F."/>
            <person name="Karlin-Newmann G."/>
            <person name="Liu S.X."/>
            <person name="Lam B."/>
            <person name="Sakano H."/>
            <person name="Wu T."/>
            <person name="Yu G."/>
            <person name="Miranda M."/>
            <person name="Quach H.L."/>
            <person name="Tripp M."/>
            <person name="Chang C.H."/>
            <person name="Lee J.M."/>
            <person name="Toriumi M.J."/>
            <person name="Chan M.M."/>
            <person name="Tang C.C."/>
            <person name="Onodera C.S."/>
            <person name="Deng J.M."/>
            <person name="Akiyama K."/>
            <person name="Ansari Y."/>
            <person name="Arakawa T."/>
            <person name="Banh J."/>
            <person name="Banno F."/>
            <person name="Bowser L."/>
            <person name="Brooks S.Y."/>
            <person name="Carninci P."/>
            <person name="Chao Q."/>
            <person name="Choy N."/>
            <person name="Enju A."/>
            <person name="Goldsmith A.D."/>
            <person name="Gurjal M."/>
            <person name="Hansen N.F."/>
            <person name="Hayashizaki Y."/>
            <person name="Johnson-Hopson C."/>
            <person name="Hsuan V.W."/>
            <person name="Iida K."/>
            <person name="Karnes M."/>
            <person name="Khan S."/>
            <person name="Koesema E."/>
            <person name="Ishida J."/>
            <person name="Jiang P.X."/>
            <person name="Jones T."/>
            <person name="Kawai J."/>
            <person name="Kamiya A."/>
            <person name="Meyers C."/>
            <person name="Nakajima M."/>
            <person name="Narusaka M."/>
            <person name="Seki M."/>
            <person name="Sakurai T."/>
            <person name="Satou M."/>
            <person name="Tamse R."/>
            <person name="Vaysberg M."/>
            <person name="Wallender E.K."/>
            <person name="Wong C."/>
            <person name="Yamamura Y."/>
            <person name="Yuan S."/>
            <person name="Shinozaki K."/>
            <person name="Davis R.W."/>
            <person name="Theologis A."/>
            <person name="Ecker J.R."/>
        </authorList>
    </citation>
    <scope>NUCLEOTIDE SEQUENCE [LARGE SCALE MRNA]</scope>
    <source>
        <strain>cv. Columbia</strain>
    </source>
</reference>
<reference key="4">
    <citation type="journal article" date="2012" name="Mol. Cell. Proteomics">
        <title>Comparative large-scale characterisation of plant vs. mammal proteins reveals similar and idiosyncratic N-alpha acetylation features.</title>
        <authorList>
            <person name="Bienvenut W.V."/>
            <person name="Sumpton D."/>
            <person name="Martinez A."/>
            <person name="Lilla S."/>
            <person name="Espagne C."/>
            <person name="Meinnel T."/>
            <person name="Giglione C."/>
        </authorList>
    </citation>
    <scope>IDENTIFICATION BY MASS SPECTROMETRY [LARGE SCALE ANALYSIS]</scope>
</reference>
<reference key="5">
    <citation type="journal article" date="2014" name="Plant Physiol.">
        <title>Arabidopsis triphosphate tunnel metalloenzyme2 is a negative regulator of the salicylic acid-mediated feedback amplification loop for defense responses.</title>
        <authorList>
            <person name="Ung H."/>
            <person name="Moeder W."/>
            <person name="Yoshioka K."/>
        </authorList>
    </citation>
    <scope>GENE FAMILY</scope>
    <scope>NOMENCLATURE</scope>
    <source>
        <strain>cv. Columbia</strain>
    </source>
</reference>
<reference key="6">
    <citation type="journal article" date="2017" name="Plant Physiol.">
        <title>Triphosphate tunnel metalloenzyme function in senescence highlights a biological diversification of this protein superfamily.</title>
        <authorList>
            <person name="Ung H."/>
            <person name="Karia P."/>
            <person name="Ebine K."/>
            <person name="Ueda T."/>
            <person name="Yoshioka K."/>
            <person name="Moeder W."/>
        </authorList>
    </citation>
    <scope>FUNCTION</scope>
    <scope>DISRUPTION PHENOTYPE</scope>
    <scope>INDUCTION BY LEAF SENESCENCE</scope>
    <scope>SUBCELLULAR LOCATION</scope>
    <scope>BIOPHYSICOCHEMICAL PROPERTIES</scope>
    <scope>COFACTOR</scope>
    <scope>TISSUE SPECIFICITY</scope>
    <scope>CATALYTIC ACTIVITY</scope>
</reference>
<sequence>MALDSSVALSPRRRHGLLRDQVQLIKRKDSGRYEIVPIEDPLSFEKGFYAVIRACQLLAQKNDGLILVGLAGPSGAGKTIFTEKILNFMPSIAIINMDNYNDGTRVIDGNFDDPRLTDYDTLLDNIHGLRDGKPVQVPIYDFKSSSRIGYRTLEVPSSRIVILEGIYALSEKLRPLLDLRVSVTGGVHFDLVKRVLRDIQRAGQEPEEIIHQISETVYPMYKAFIEPDLKTAQIKILNKFNPFSGFQNPTYILKSSKAVTPEQMKAALSEDFKERTEETYDIYLLPPGEDPEACQSYLRMRNRDGKYNLMFEEWVTDRPFIISPRITFEVSVRLLGGLMALGYTIATILKRKSHIFDDDKVIVKTDWLEQLNRTYVQVQGKDRTFVKNVADQLGLEGSYVPHTYIEQIQLERLVNDVLALPDDLKTKLSLDDDTVSSPKEALSRASVDSRMKYLHGGVSKSYTNPRHKVLPNLTRLAVNNRMLDARAPASPATLPNQGFITQLSDQISTLNERMDEFTSRIEELNSKIPNRIAPSGSQHNLALPIENGNGSVLSFSASASQLVRESPLMEEVVLVARGQRQIMHQMDTLSNLLREYVGEKTRIERLDSSRTNSTTQNLESSTVPILLGLAIGCVGIFAYSRLK</sequence>